<keyword id="KW-0002">3D-structure</keyword>
<keyword id="KW-0378">Hydrolase</keyword>
<keyword id="KW-0479">Metal-binding</keyword>
<keyword id="KW-0482">Metalloprotease</keyword>
<keyword id="KW-0645">Protease</keyword>
<keyword id="KW-1185">Reference proteome</keyword>
<keyword id="KW-0862">Zinc</keyword>
<gene>
    <name type="ORF">WOSG25_110680</name>
</gene>
<dbReference type="EC" id="3.4.24.69" evidence="3"/>
<dbReference type="EMBL" id="DF820494">
    <property type="protein sequence ID" value="GAK31590.1"/>
    <property type="molecule type" value="Genomic_DNA"/>
</dbReference>
<dbReference type="RefSeq" id="WP_027699549.1">
    <property type="nucleotide sequence ID" value="NZ_DF820494.1"/>
</dbReference>
<dbReference type="PDB" id="6RIM">
    <property type="method" value="X-ray"/>
    <property type="resolution" value="1.60 A"/>
    <property type="chains" value="A/B/C/D/E/F/G/H=2-476"/>
</dbReference>
<dbReference type="PDB" id="8C8G">
    <property type="method" value="EM"/>
    <property type="resolution" value="2.98 A"/>
    <property type="chains" value="A=1-1336"/>
</dbReference>
<dbReference type="PDBsum" id="6RIM"/>
<dbReference type="PDBsum" id="8C8G"/>
<dbReference type="EMDB" id="EMD-16475"/>
<dbReference type="SMR" id="A0A069CUU9"/>
<dbReference type="STRING" id="1329250.WOSG25_110680"/>
<dbReference type="Proteomes" id="UP000030643">
    <property type="component" value="Unassembled WGS sequence"/>
</dbReference>
<dbReference type="GO" id="GO:0046872">
    <property type="term" value="F:metal ion binding"/>
    <property type="evidence" value="ECO:0007669"/>
    <property type="project" value="UniProtKB-KW"/>
</dbReference>
<dbReference type="GO" id="GO:0004222">
    <property type="term" value="F:metalloendopeptidase activity"/>
    <property type="evidence" value="ECO:0007669"/>
    <property type="project" value="UniProtKB-EC"/>
</dbReference>
<dbReference type="GO" id="GO:0006508">
    <property type="term" value="P:proteolysis"/>
    <property type="evidence" value="ECO:0007669"/>
    <property type="project" value="UniProtKB-KW"/>
</dbReference>
<dbReference type="Gene3D" id="2.60.120.200">
    <property type="match status" value="1"/>
</dbReference>
<dbReference type="Gene3D" id="2.80.10.50">
    <property type="match status" value="1"/>
</dbReference>
<dbReference type="Gene3D" id="3.90.1240.10">
    <property type="entry name" value="Metalloproteases ('zincins'), catalytic domain like"/>
    <property type="match status" value="1"/>
</dbReference>
<dbReference type="InterPro" id="IPR013320">
    <property type="entry name" value="ConA-like_dom_sf"/>
</dbReference>
<dbReference type="InterPro" id="IPR011065">
    <property type="entry name" value="Kunitz_inhibitor_STI-like_sf"/>
</dbReference>
<dbReference type="SUPFAM" id="SSF49899">
    <property type="entry name" value="Concanavalin A-like lectins/glucanases"/>
    <property type="match status" value="1"/>
</dbReference>
<dbReference type="SUPFAM" id="SSF55486">
    <property type="entry name" value="Metalloproteases ('zincins'), catalytic domain"/>
    <property type="match status" value="1"/>
</dbReference>
<dbReference type="SUPFAM" id="SSF50386">
    <property type="entry name" value="STI-like"/>
    <property type="match status" value="1"/>
</dbReference>
<dbReference type="PROSITE" id="PS00142">
    <property type="entry name" value="ZINC_PROTEASE"/>
    <property type="match status" value="1"/>
</dbReference>
<reference key="1">
    <citation type="journal article" date="2014" name="Genome Announc.">
        <title>Draft genome sequence of Weissella oryzae SG25T, isolated from fermented rice grains.</title>
        <authorList>
            <person name="Tanizawa Y."/>
            <person name="Fujisawa T."/>
            <person name="Mochizuki T."/>
            <person name="Kaminuma E."/>
            <person name="Suzuki Y."/>
            <person name="Nakamura Y."/>
            <person name="Tohno M."/>
        </authorList>
    </citation>
    <scope>NUCLEOTIDE SEQUENCE [LARGE SCALE GENOMIC DNA]</scope>
    <source>
        <strain>DSM 25784 / JCM 18191 / LMG 30913 / SG25</strain>
    </source>
</reference>
<reference key="2">
    <citation type="journal article" date="2015" name="FEBS Lett.">
        <title>Botulinum neurotoxin homologs in non-Clostridium species.</title>
        <authorList>
            <person name="Mansfield M.J."/>
            <person name="Adams J.B."/>
            <person name="Doxey A.C."/>
        </authorList>
    </citation>
    <scope>DISCUSSION OF SEQUENCE</scope>
</reference>
<reference key="3">
    <citation type="journal article" date="2016" name="Sci. Rep.">
        <title>The first non Clostridial botulinum-like toxin cleaves VAMP within the juxtamembrane domain.</title>
        <authorList>
            <person name="Zornetta I."/>
            <person name="Azarnia Tehran D."/>
            <person name="Arrigoni G."/>
            <person name="Anniballi F."/>
            <person name="Bano L."/>
            <person name="Leka O."/>
            <person name="Zanotti G."/>
            <person name="Binz T."/>
            <person name="Montecucco C."/>
        </authorList>
    </citation>
    <scope>FUNCTION</scope>
    <scope>CATALYTIC ACTIVITY</scope>
    <scope>ACTIVITY REGULATION</scope>
</reference>
<proteinExistence type="evidence at protein level"/>
<comment type="function">
    <text evidence="3">When overexpressed the N-terminus (residues 1-476) cleaves rat synaptobrevin-2/VAMP2 between '89-Trp-|-Trp-90' in vitro. This releases the cytoplasmic domain of VAMP2 from the synaptic vesicle membrane, which would prevent the assembly of the trans-SNARE complex on the membrane and thus prevent vesicle-target membrane fusion and neurotransmitter release (PubMed:27443638).</text>
</comment>
<comment type="catalytic activity">
    <reaction evidence="3">
        <text>Limited hydrolysis of proteins of the neuroexocytosis apparatus, synaptobrevins, SNAP25 or syntaxin. No detected action on small molecule substrates.</text>
        <dbReference type="EC" id="3.4.24.69"/>
    </reaction>
</comment>
<comment type="cofactor">
    <cofactor evidence="1 7">
        <name>Zn(2+)</name>
        <dbReference type="ChEBI" id="CHEBI:29105"/>
    </cofactor>
</comment>
<comment type="activity regulation">
    <text evidence="3">Inhibited by EDTA and 1,10-phenanthroline (PubMed:27443638).</text>
</comment>
<comment type="miscellaneous">
    <text evidence="3">There are seven antigenically distinct forms of botulinum neurotoxin: Types A, B, C, D, E, F, and G, but serologically this does not belong to any of them.</text>
</comment>
<comment type="similarity">
    <text evidence="6">Belongs to the peptidase M27 family.</text>
</comment>
<comment type="caution">
    <text evidence="4">This bacteria is missing genes associated with the botulinum neurotoxin cluster in Clostridia (botR, hemagglutinin genes and ORF-X proteins), so it is not clear if it is actually a toxin. The in situ target might not be animal as this bacteria was isolated from fermented rice grains.</text>
</comment>
<name>BXWO_WEIOS</name>
<sequence length="1336" mass="153025">MDVLEMFDVNYESPILESFDSTTQSLNDVHVFMSRIQMSAYDADGEGRIEYRNLKLYEISSGIFISTDRLDTGASGVEDDHEMVDYYSSARLTREFLGESLDSQKSDYFEGIKKVFSFYKNKCNESRYIKEFFEEIQFRNICGFPKQAGTSSTDIFDQFNSVDVLLQDPVTSVWNKKVGSKKANIVIIPPATNLPITEACATAGFQPEGFPKLGSGSFFTVQFDPFFSTRFKAHETDDVALLDPTLTLLHEMTHGLHFQKGIANPVNRSGETPAWATTWGRVTGDNDAFKETPMEELLTFNKHTIDDDIEISDHLKSTYIGFLYNGRNEDDPTESVDGVYQNVSSFLNQYRGFEISSDFQHFIESCYGVKYNQESKKFIVNPRNIKRYVQDGFFIDEAKFARILNIKTRSYYTLMPDNLGVWSYRVDILNRLRETFDEDRGLLSQELDFHTALTPVVSENPALELEVAGMQRMVSLPKIKASYLPSDIKIKNFTGQKISHDTILDTNISGIIISKIKYKSDFVVDESMPRSSLNTTNYNLSPIKGTKFETDIRDKTSVKVTVSEITAPMINHVMKLDNSKVLTERPSLNEDLEETFKNTKDVYIPKTTAMMKLKEGADQTLGAVGFAVWSGQILEDLYNLAQKKEVSIDQIKDDLMSILPFYCAYKNLSAEKYEQAFANATLDAFLIFATDGGGFAGLGITVGAIAINSMYAKAETMEAYDSMFGKYVDQYQNDIKNFTLNAYVQWENNILSRLWNESRLAITGFRNMLKTVKTVMEFDATNQAYSEEDRKIIKAKCEEIFSEFPMLMQTFAKNSMTANLENASKIFNDIVWQKIKEELDQYVIDSKKYFLDSLEEAYNNGSISAESYYKYQTEAREKFVSPREVIDLYIAAHDTVVKRKRYIRRYSRKYDLATDFKGNTVHLNGLGEGTQDIQDLYGNYSVYADKKTVSTQEGHFDQTIKIAKDTNTINKVVLAVSSNNGKEYALNKDEQYTISFWLRMPVPSSSEERRIFSYSAVSGVNKEVEELILQVKNNEFVLATANLLRNSEFVIEPRIALNRWVKITIVNENTRIKVYQNDNLLGLIKDSSRKKPIAQRGTFKFYNYNVDYQLDDISYYNGTISQRDIKYTFKEDHGQFVYDHWGERLQYNKAYYLLSDDNKSAFETVYETKRLKLKSVPGVDIKYLGMNDRVYGYYGGLQFKLVPLDSKNMNNYVRWGDKFTMQSIETTNLSLAIIQDNAYFAPTQLKLISNEGKSEEEIFTFDRNIKLQNAAILVGTGNSKQGPISAYKRGYSGDLWINGARLDGYVTVVNKSNYSNDEIQEKFKWIFVPKDANWVE</sequence>
<evidence type="ECO:0000250" key="1">
    <source>
        <dbReference type="UniProtKB" id="P0DPI0"/>
    </source>
</evidence>
<evidence type="ECO:0000255" key="2">
    <source>
        <dbReference type="PROSITE-ProRule" id="PRU10095"/>
    </source>
</evidence>
<evidence type="ECO:0000269" key="3">
    <source>
    </source>
</evidence>
<evidence type="ECO:0000303" key="4">
    <source>
    </source>
</evidence>
<evidence type="ECO:0000303" key="5">
    <source>
    </source>
</evidence>
<evidence type="ECO:0000305" key="6"/>
<evidence type="ECO:0000305" key="7">
    <source>
    </source>
</evidence>
<evidence type="ECO:0007829" key="8">
    <source>
        <dbReference type="PDB" id="6RIM"/>
    </source>
</evidence>
<evidence type="ECO:0007829" key="9">
    <source>
        <dbReference type="PDB" id="8C8G"/>
    </source>
</evidence>
<accession>A0A069CUU9</accession>
<organism>
    <name type="scientific">Weissella oryzae (strain DSM 25784 / JCM 18191 / LMG 30913 / SG25)</name>
    <dbReference type="NCBI Taxonomy" id="1329250"/>
    <lineage>
        <taxon>Bacteria</taxon>
        <taxon>Bacillati</taxon>
        <taxon>Bacillota</taxon>
        <taxon>Bacilli</taxon>
        <taxon>Lactobacillales</taxon>
        <taxon>Lactobacillaceae</taxon>
        <taxon>Weissella</taxon>
    </lineage>
</organism>
<protein>
    <recommendedName>
        <fullName evidence="5">Putative botulinum-like toxin Wo</fullName>
        <shortName evidence="5">BoNT/Wo</shortName>
        <ecNumber evidence="3">3.4.24.69</ecNumber>
    </recommendedName>
</protein>
<feature type="chain" id="PRO_0000444914" description="Putative botulinum-like toxin Wo">
    <location>
        <begin position="1"/>
        <end position="1336"/>
    </location>
</feature>
<feature type="region of interest" description="Has protease activity" evidence="3">
    <location>
        <begin position="1"/>
        <end position="476"/>
    </location>
</feature>
<feature type="active site" evidence="2">
    <location>
        <position position="251"/>
    </location>
</feature>
<feature type="binding site" evidence="2">
    <location>
        <position position="250"/>
    </location>
    <ligand>
        <name>Zn(2+)</name>
        <dbReference type="ChEBI" id="CHEBI:29105"/>
        <note>catalytic</note>
    </ligand>
</feature>
<feature type="binding site" evidence="2">
    <location>
        <position position="254"/>
    </location>
    <ligand>
        <name>Zn(2+)</name>
        <dbReference type="ChEBI" id="CHEBI:29105"/>
        <note>catalytic</note>
    </ligand>
</feature>
<feature type="binding site" evidence="1">
    <location>
        <position position="296"/>
    </location>
    <ligand>
        <name>Zn(2+)</name>
        <dbReference type="ChEBI" id="CHEBI:29105"/>
        <note>catalytic</note>
    </ligand>
</feature>
<feature type="strand" evidence="9">
    <location>
        <begin position="11"/>
        <end position="13"/>
    </location>
</feature>
<feature type="turn" evidence="8">
    <location>
        <begin position="21"/>
        <end position="23"/>
    </location>
</feature>
<feature type="helix" evidence="8">
    <location>
        <begin position="26"/>
        <end position="28"/>
    </location>
</feature>
<feature type="strand" evidence="8">
    <location>
        <begin position="31"/>
        <end position="41"/>
    </location>
</feature>
<feature type="strand" evidence="8">
    <location>
        <begin position="47"/>
        <end position="60"/>
    </location>
</feature>
<feature type="strand" evidence="8">
    <location>
        <begin position="63"/>
        <end position="65"/>
    </location>
</feature>
<feature type="strand" evidence="8">
    <location>
        <begin position="81"/>
        <end position="87"/>
    </location>
</feature>
<feature type="turn" evidence="8">
    <location>
        <begin position="91"/>
        <end position="93"/>
    </location>
</feature>
<feature type="strand" evidence="9">
    <location>
        <begin position="97"/>
        <end position="99"/>
    </location>
</feature>
<feature type="helix" evidence="8">
    <location>
        <begin position="101"/>
        <end position="125"/>
    </location>
</feature>
<feature type="helix" evidence="8">
    <location>
        <begin position="127"/>
        <end position="138"/>
    </location>
</feature>
<feature type="turn" evidence="8">
    <location>
        <begin position="158"/>
        <end position="160"/>
    </location>
</feature>
<feature type="strand" evidence="8">
    <location>
        <begin position="161"/>
        <end position="167"/>
    </location>
</feature>
<feature type="turn" evidence="8">
    <location>
        <begin position="169"/>
        <end position="171"/>
    </location>
</feature>
<feature type="strand" evidence="8">
    <location>
        <begin position="174"/>
        <end position="182"/>
    </location>
</feature>
<feature type="strand" evidence="8">
    <location>
        <begin position="184"/>
        <end position="188"/>
    </location>
</feature>
<feature type="strand" evidence="8">
    <location>
        <begin position="200"/>
        <end position="204"/>
    </location>
</feature>
<feature type="strand" evidence="8">
    <location>
        <begin position="219"/>
        <end position="222"/>
    </location>
</feature>
<feature type="strand" evidence="8">
    <location>
        <begin position="227"/>
        <end position="232"/>
    </location>
</feature>
<feature type="strand" evidence="8">
    <location>
        <begin position="239"/>
        <end position="241"/>
    </location>
</feature>
<feature type="helix" evidence="8">
    <location>
        <begin position="244"/>
        <end position="259"/>
    </location>
</feature>
<feature type="helix" evidence="8">
    <location>
        <begin position="274"/>
        <end position="276"/>
    </location>
</feature>
<feature type="strand" evidence="9">
    <location>
        <begin position="277"/>
        <end position="282"/>
    </location>
</feature>
<feature type="strand" evidence="8">
    <location>
        <begin position="284"/>
        <end position="286"/>
    </location>
</feature>
<feature type="strand" evidence="9">
    <location>
        <begin position="288"/>
        <end position="293"/>
    </location>
</feature>
<feature type="helix" evidence="8">
    <location>
        <begin position="294"/>
        <end position="300"/>
    </location>
</feature>
<feature type="helix" evidence="8">
    <location>
        <begin position="302"/>
        <end position="304"/>
    </location>
</feature>
<feature type="helix" evidence="8">
    <location>
        <begin position="309"/>
        <end position="325"/>
    </location>
</feature>
<feature type="helix" evidence="8">
    <location>
        <begin position="332"/>
        <end position="334"/>
    </location>
</feature>
<feature type="helix" evidence="8">
    <location>
        <begin position="339"/>
        <end position="348"/>
    </location>
</feature>
<feature type="turn" evidence="8">
    <location>
        <begin position="349"/>
        <end position="352"/>
    </location>
</feature>
<feature type="helix" evidence="8">
    <location>
        <begin position="357"/>
        <end position="367"/>
    </location>
</feature>
<feature type="strand" evidence="8">
    <location>
        <begin position="370"/>
        <end position="372"/>
    </location>
</feature>
<feature type="turn" evidence="8">
    <location>
        <begin position="373"/>
        <end position="376"/>
    </location>
</feature>
<feature type="strand" evidence="8">
    <location>
        <begin position="377"/>
        <end position="379"/>
    </location>
</feature>
<feature type="helix" evidence="8">
    <location>
        <begin position="382"/>
        <end position="391"/>
    </location>
</feature>
<feature type="helix" evidence="8">
    <location>
        <begin position="397"/>
        <end position="404"/>
    </location>
</feature>
<feature type="helix" evidence="9">
    <location>
        <begin position="411"/>
        <end position="413"/>
    </location>
</feature>
<feature type="strand" evidence="8">
    <location>
        <begin position="423"/>
        <end position="425"/>
    </location>
</feature>
<feature type="strand" evidence="8">
    <location>
        <begin position="431"/>
        <end position="434"/>
    </location>
</feature>
<feature type="turn" evidence="8">
    <location>
        <begin position="438"/>
        <end position="440"/>
    </location>
</feature>
<feature type="strand" evidence="8">
    <location>
        <begin position="441"/>
        <end position="443"/>
    </location>
</feature>
<feature type="helix" evidence="8">
    <location>
        <begin position="447"/>
        <end position="449"/>
    </location>
</feature>
<feature type="strand" evidence="8">
    <location>
        <begin position="450"/>
        <end position="452"/>
    </location>
</feature>
<feature type="strand" evidence="9">
    <location>
        <begin position="456"/>
        <end position="458"/>
    </location>
</feature>
<feature type="strand" evidence="9">
    <location>
        <begin position="462"/>
        <end position="467"/>
    </location>
</feature>
<feature type="strand" evidence="9">
    <location>
        <begin position="474"/>
        <end position="479"/>
    </location>
</feature>
<feature type="helix" evidence="9">
    <location>
        <begin position="480"/>
        <end position="482"/>
    </location>
</feature>
<feature type="strand" evidence="9">
    <location>
        <begin position="526"/>
        <end position="528"/>
    </location>
</feature>
<feature type="strand" evidence="9">
    <location>
        <begin position="530"/>
        <end position="532"/>
    </location>
</feature>
<feature type="strand" evidence="9">
    <location>
        <begin position="543"/>
        <end position="545"/>
    </location>
</feature>
<feature type="strand" evidence="9">
    <location>
        <begin position="549"/>
        <end position="551"/>
    </location>
</feature>
<feature type="strand" evidence="9">
    <location>
        <begin position="559"/>
        <end position="564"/>
    </location>
</feature>
<feature type="helix" evidence="9">
    <location>
        <begin position="567"/>
        <end position="573"/>
    </location>
</feature>
<feature type="strand" evidence="9">
    <location>
        <begin position="588"/>
        <end position="590"/>
    </location>
</feature>
<feature type="helix" evidence="9">
    <location>
        <begin position="592"/>
        <end position="595"/>
    </location>
</feature>
<feature type="strand" evidence="9">
    <location>
        <begin position="598"/>
        <end position="600"/>
    </location>
</feature>
<feature type="turn" evidence="9">
    <location>
        <begin position="608"/>
        <end position="610"/>
    </location>
</feature>
<feature type="helix" evidence="9">
    <location>
        <begin position="611"/>
        <end position="614"/>
    </location>
</feature>
<feature type="helix" evidence="9">
    <location>
        <begin position="623"/>
        <end position="638"/>
    </location>
</feature>
<feature type="turn" evidence="9">
    <location>
        <begin position="639"/>
        <end position="641"/>
    </location>
</feature>
<feature type="strand" evidence="9">
    <location>
        <begin position="649"/>
        <end position="651"/>
    </location>
</feature>
<feature type="helix" evidence="9">
    <location>
        <begin position="660"/>
        <end position="665"/>
    </location>
</feature>
<feature type="helix" evidence="9">
    <location>
        <begin position="672"/>
        <end position="675"/>
    </location>
</feature>
<feature type="turn" evidence="9">
    <location>
        <begin position="676"/>
        <end position="679"/>
    </location>
</feature>
<feature type="strand" evidence="9">
    <location>
        <begin position="692"/>
        <end position="695"/>
    </location>
</feature>
<feature type="helix" evidence="9">
    <location>
        <begin position="717"/>
        <end position="749"/>
    </location>
</feature>
<feature type="helix" evidence="9">
    <location>
        <begin position="751"/>
        <end position="780"/>
    </location>
</feature>
<feature type="turn" evidence="9">
    <location>
        <begin position="787"/>
        <end position="789"/>
    </location>
</feature>
<feature type="helix" evidence="9">
    <location>
        <begin position="790"/>
        <end position="800"/>
    </location>
</feature>
<feature type="helix" evidence="9">
    <location>
        <begin position="801"/>
        <end position="803"/>
    </location>
</feature>
<feature type="helix" evidence="9">
    <location>
        <begin position="804"/>
        <end position="829"/>
    </location>
</feature>
<feature type="helix" evidence="9">
    <location>
        <begin position="831"/>
        <end position="860"/>
    </location>
</feature>
<feature type="helix" evidence="9">
    <location>
        <begin position="865"/>
        <end position="878"/>
    </location>
</feature>
<feature type="strand" evidence="9">
    <location>
        <begin position="879"/>
        <end position="881"/>
    </location>
</feature>
<feature type="helix" evidence="9">
    <location>
        <begin position="884"/>
        <end position="904"/>
    </location>
</feature>
<feature type="strand" evidence="9">
    <location>
        <begin position="916"/>
        <end position="919"/>
    </location>
</feature>
<feature type="strand" evidence="9">
    <location>
        <begin position="928"/>
        <end position="930"/>
    </location>
</feature>
<feature type="strand" evidence="9">
    <location>
        <begin position="934"/>
        <end position="939"/>
    </location>
</feature>
<feature type="strand" evidence="9">
    <location>
        <begin position="941"/>
        <end position="944"/>
    </location>
</feature>
<feature type="turn" evidence="9">
    <location>
        <begin position="946"/>
        <end position="948"/>
    </location>
</feature>
<feature type="strand" evidence="9">
    <location>
        <begin position="955"/>
        <end position="962"/>
    </location>
</feature>
<feature type="strand" evidence="9">
    <location>
        <begin position="966"/>
        <end position="968"/>
    </location>
</feature>
<feature type="strand" evidence="9">
    <location>
        <begin position="972"/>
        <end position="977"/>
    </location>
</feature>
<feature type="strand" evidence="9">
    <location>
        <begin position="987"/>
        <end position="989"/>
    </location>
</feature>
<feature type="strand" evidence="9">
    <location>
        <begin position="992"/>
        <end position="999"/>
    </location>
</feature>
<feature type="strand" evidence="9">
    <location>
        <begin position="1010"/>
        <end position="1017"/>
    </location>
</feature>
<feature type="strand" evidence="9">
    <location>
        <begin position="1019"/>
        <end position="1021"/>
    </location>
</feature>
<feature type="strand" evidence="9">
    <location>
        <begin position="1023"/>
        <end position="1031"/>
    </location>
</feature>
<feature type="strand" evidence="9">
    <location>
        <begin position="1033"/>
        <end position="1045"/>
    </location>
</feature>
<feature type="strand" evidence="9">
    <location>
        <begin position="1057"/>
        <end position="1067"/>
    </location>
</feature>
<feature type="strand" evidence="9">
    <location>
        <begin position="1072"/>
        <end position="1076"/>
    </location>
</feature>
<feature type="strand" evidence="9">
    <location>
        <begin position="1079"/>
        <end position="1084"/>
    </location>
</feature>
<feature type="strand" evidence="9">
    <location>
        <begin position="1089"/>
        <end position="1091"/>
    </location>
</feature>
<feature type="strand" evidence="9">
    <location>
        <begin position="1097"/>
        <end position="1102"/>
    </location>
</feature>
<feature type="strand" evidence="9">
    <location>
        <begin position="1104"/>
        <end position="1106"/>
    </location>
</feature>
<feature type="strand" evidence="9">
    <location>
        <begin position="1108"/>
        <end position="1118"/>
    </location>
</feature>
<feature type="helix" evidence="9">
    <location>
        <begin position="1122"/>
        <end position="1132"/>
    </location>
</feature>
<feature type="strand" evidence="9">
    <location>
        <begin position="1140"/>
        <end position="1144"/>
    </location>
</feature>
<feature type="strand" evidence="9">
    <location>
        <begin position="1151"/>
        <end position="1154"/>
    </location>
</feature>
<feature type="strand" evidence="9">
    <location>
        <begin position="1156"/>
        <end position="1158"/>
    </location>
</feature>
<feature type="strand" evidence="9">
    <location>
        <begin position="1166"/>
        <end position="1171"/>
    </location>
</feature>
<feature type="strand" evidence="9">
    <location>
        <begin position="1198"/>
        <end position="1202"/>
    </location>
</feature>
<feature type="strand" evidence="9">
    <location>
        <begin position="1219"/>
        <end position="1226"/>
    </location>
</feature>
<feature type="strand" evidence="9">
    <location>
        <begin position="1229"/>
        <end position="1235"/>
    </location>
</feature>
<feature type="strand" evidence="9">
    <location>
        <begin position="1237"/>
        <end position="1241"/>
    </location>
</feature>
<feature type="strand" evidence="9">
    <location>
        <begin position="1243"/>
        <end position="1249"/>
    </location>
</feature>
<feature type="strand" evidence="9">
    <location>
        <begin position="1251"/>
        <end position="1253"/>
    </location>
</feature>
<feature type="strand" evidence="9">
    <location>
        <begin position="1259"/>
        <end position="1261"/>
    </location>
</feature>
<feature type="strand" evidence="9">
    <location>
        <begin position="1273"/>
        <end position="1275"/>
    </location>
</feature>
<feature type="strand" evidence="9">
    <location>
        <begin position="1277"/>
        <end position="1279"/>
    </location>
</feature>
<feature type="helix" evidence="9">
    <location>
        <begin position="1286"/>
        <end position="1289"/>
    </location>
</feature>
<feature type="strand" evidence="9">
    <location>
        <begin position="1295"/>
        <end position="1297"/>
    </location>
</feature>
<feature type="turn" evidence="9">
    <location>
        <begin position="1301"/>
        <end position="1304"/>
    </location>
</feature>
<feature type="strand" evidence="9">
    <location>
        <begin position="1305"/>
        <end position="1308"/>
    </location>
</feature>
<feature type="turn" evidence="9">
    <location>
        <begin position="1313"/>
        <end position="1316"/>
    </location>
</feature>
<feature type="strand" evidence="9">
    <location>
        <begin position="1325"/>
        <end position="1329"/>
    </location>
</feature>